<accession>Q91V08</accession>
<accession>Q1AFZ3</accession>
<accession>Q8VI19</accession>
<accession>Q8VI20</accession>
<comment type="function">
    <text evidence="4 6 7 8 9">Receptor for KLRB1B that protects target cells against natural killer cell-mediated lysis (PubMed:14990792, PubMed:16751398). Inhibits osteoclast formation (PubMed:11278931, PubMed:12374791). Binds high molecular weight sulfated glycosaminoglycans (PubMed:15123656).</text>
</comment>
<comment type="subunit">
    <text evidence="1">Homodimer; disulfide-linked.</text>
</comment>
<comment type="subcellular location">
    <subcellularLocation>
        <location evidence="7 9">Cell membrane</location>
        <topology evidence="7">Single-pass type II membrane protein</topology>
    </subcellularLocation>
</comment>
<comment type="tissue specificity">
    <text evidence="4 5 6 7 9">Detected in fetal heart, brain, lung, chondrocytes, perichondrium and osteoblasts, and in adult splenocytes, thymocytes, lymph-node cells, osteoblasts, growth plate chondrocytes and skeletal muscle overlying the bone (at protein level). Ubiquitous. Detected in thymus, bone marrow, lung, gut, heart, skeletal muscle, ovary, spleen, ileum, liver and kidney.</text>
</comment>
<comment type="induction">
    <text evidence="4">Constitutively expressed in bone marrow cells. Down-regulated by treatment with 1,25-dihydroxyvitamin D3. Up-regulated in calvarial osteoblast cells by IL-1alpha, IL11, and 1,25-dihydroxyvitamin D3.</text>
</comment>
<comment type="PTM">
    <text evidence="1">N-glycosylated.</text>
</comment>
<organism>
    <name type="scientific">Mus musculus</name>
    <name type="common">Mouse</name>
    <dbReference type="NCBI Taxonomy" id="10090"/>
    <lineage>
        <taxon>Eukaryota</taxon>
        <taxon>Metazoa</taxon>
        <taxon>Chordata</taxon>
        <taxon>Craniata</taxon>
        <taxon>Vertebrata</taxon>
        <taxon>Euteleostomi</taxon>
        <taxon>Mammalia</taxon>
        <taxon>Eutheria</taxon>
        <taxon>Euarchontoglires</taxon>
        <taxon>Glires</taxon>
        <taxon>Rodentia</taxon>
        <taxon>Myomorpha</taxon>
        <taxon>Muroidea</taxon>
        <taxon>Muridae</taxon>
        <taxon>Murinae</taxon>
        <taxon>Mus</taxon>
        <taxon>Mus</taxon>
    </lineage>
</organism>
<evidence type="ECO:0000250" key="1">
    <source>
        <dbReference type="UniProtKB" id="Q9UHP7"/>
    </source>
</evidence>
<evidence type="ECO:0000255" key="2"/>
<evidence type="ECO:0000255" key="3">
    <source>
        <dbReference type="PROSITE-ProRule" id="PRU00040"/>
    </source>
</evidence>
<evidence type="ECO:0000269" key="4">
    <source>
    </source>
</evidence>
<evidence type="ECO:0000269" key="5">
    <source>
    </source>
</evidence>
<evidence type="ECO:0000269" key="6">
    <source>
    </source>
</evidence>
<evidence type="ECO:0000269" key="7">
    <source>
    </source>
</evidence>
<evidence type="ECO:0000269" key="8">
    <source>
    </source>
</evidence>
<evidence type="ECO:0000269" key="9">
    <source>
    </source>
</evidence>
<evidence type="ECO:0007744" key="10">
    <source>
    </source>
</evidence>
<evidence type="ECO:0007744" key="11">
    <source>
    </source>
</evidence>
<evidence type="ECO:0007829" key="12">
    <source>
        <dbReference type="PDB" id="6E7D"/>
    </source>
</evidence>
<gene>
    <name type="primary">Clec2d</name>
    <name type="synonym">Clrb</name>
    <name type="synonym">Ocil</name>
</gene>
<reference key="1">
    <citation type="journal article" date="2001" name="Immunogenetics">
        <title>Cloning of Clr, a new family of lectin-like genes localized between mouse Nkrp1a and Cd69.</title>
        <authorList>
            <person name="Plougastel B."/>
            <person name="Dubbelde C."/>
            <person name="Yokoyama W.M."/>
        </authorList>
    </citation>
    <scope>NUCLEOTIDE SEQUENCE [GENOMIC DNA / MRNA]</scope>
    <scope>TISSUE SPECIFICITY</scope>
    <source>
        <strain>C57BL/6J</strain>
        <tissue>Natural killer cell</tissue>
    </source>
</reference>
<reference key="2">
    <citation type="journal article" date="2001" name="J. Biol. Chem.">
        <title>A novel osteoblast-derived C-type lectin that inhibits osteoclast formation.</title>
        <authorList>
            <person name="Zhou H."/>
            <person name="Kartsogiannis V."/>
            <person name="Hu Y.S."/>
            <person name="Elliott J."/>
            <person name="Quinn J.M.W."/>
            <person name="McKinstry W.J."/>
            <person name="Gillespie M.T."/>
            <person name="Ng K.W."/>
        </authorList>
    </citation>
    <scope>NUCLEOTIDE SEQUENCE [MRNA]</scope>
    <scope>FUNCTION</scope>
    <scope>INDUCTION</scope>
    <scope>TISSUE SPECIFICITY</scope>
    <source>
        <strain>C57BL/6J</strain>
    </source>
</reference>
<reference key="3">
    <citation type="journal article" date="2002" name="J. Biol. Chem.">
        <title>Osteoclast inhibitory lectin, a family of new osteoclast inhibitors.</title>
        <authorList>
            <person name="Zhou H."/>
            <person name="Kartsogiannis V."/>
            <person name="Quinn J.M.W."/>
            <person name="Ly C."/>
            <person name="Gange C."/>
            <person name="Elliott J."/>
            <person name="Ng K.W."/>
            <person name="Gillespie M.T."/>
        </authorList>
    </citation>
    <scope>NUCLEOTIDE SEQUENCE [GENOMIC DNA]</scope>
    <scope>FUNCTION</scope>
    <scope>TISSUE SPECIFICITY</scope>
    <source>
        <strain>129/Sv</strain>
    </source>
</reference>
<reference key="4">
    <citation type="journal article" date="2004" name="Proc. Natl. Acad. Sci. U.S.A.">
        <title>Missing self-recognition of Ocil/Clr-b by inhibitory NKR-P1 natural killer cell receptors.</title>
        <authorList>
            <person name="Carlyle J.R."/>
            <person name="Jamieson A.M."/>
            <person name="Gasser S."/>
            <person name="Clingan C.S."/>
            <person name="Arase H."/>
            <person name="Raulet D.H."/>
        </authorList>
    </citation>
    <scope>NUCLEOTIDE SEQUENCE [MRNA]</scope>
    <scope>FUNCTION</scope>
    <scope>SUBCELLULAR LOCATION</scope>
    <scope>TISSUE SPECIFICITY</scope>
    <source>
        <strain>C57BL/6J</strain>
        <tissue>Spleen</tissue>
    </source>
</reference>
<reference key="5">
    <citation type="journal article" date="2004" name="Genome Res.">
        <title>The status, quality, and expansion of the NIH full-length cDNA project: the Mammalian Gene Collection (MGC).</title>
        <authorList>
            <consortium name="The MGC Project Team"/>
        </authorList>
    </citation>
    <scope>NUCLEOTIDE SEQUENCE [LARGE SCALE MRNA]</scope>
</reference>
<reference key="6">
    <citation type="journal article" date="2006" name="J. Immunol.">
        <title>Molecular and genetic basis for strain-dependent NK1.1 alloreactivity of mouse NK cells.</title>
        <authorList>
            <person name="Carlyle J.R."/>
            <person name="Mesci A."/>
            <person name="Ljutic B."/>
            <person name="Belanger S."/>
            <person name="Tai L.-H."/>
            <person name="Rousselle E."/>
            <person name="Troke A.D."/>
            <person name="Proteau M.-F."/>
            <person name="Makrigiannis A.P."/>
        </authorList>
    </citation>
    <scope>NUCLEOTIDE SEQUENCE [GENOMIC DNA] OF 66-160</scope>
    <scope>FUNCTION</scope>
    <scope>SUBCELLULAR LOCATION</scope>
    <scope>TISSUE SPECIFICITY</scope>
    <source>
        <strain>BALB/cByJ</strain>
    </source>
</reference>
<reference key="7">
    <citation type="journal article" date="2004" name="J. Biol. Chem.">
        <title>Characterization of sugar binding by osteoclast inhibitory lectin.</title>
        <authorList>
            <person name="Gange C.T."/>
            <person name="Quinn J.M.W."/>
            <person name="Zhou H."/>
            <person name="Kartsogiannis V."/>
            <person name="Gillespie M.T."/>
            <person name="Ng K.W."/>
        </authorList>
    </citation>
    <scope>FUNCTION</scope>
</reference>
<reference key="8">
    <citation type="journal article" date="2009" name="Immunity">
        <title>The phagosomal proteome in interferon-gamma-activated macrophages.</title>
        <authorList>
            <person name="Trost M."/>
            <person name="English L."/>
            <person name="Lemieux S."/>
            <person name="Courcelles M."/>
            <person name="Desjardins M."/>
            <person name="Thibault P."/>
        </authorList>
    </citation>
    <scope>PHOSPHORYLATION [LARGE SCALE ANALYSIS] AT SER-12</scope>
    <scope>IDENTIFICATION BY MASS SPECTROMETRY [LARGE SCALE ANALYSIS]</scope>
</reference>
<reference key="9">
    <citation type="journal article" date="2010" name="Cell">
        <title>A tissue-specific atlas of mouse protein phosphorylation and expression.</title>
        <authorList>
            <person name="Huttlin E.L."/>
            <person name="Jedrychowski M.P."/>
            <person name="Elias J.E."/>
            <person name="Goswami T."/>
            <person name="Rad R."/>
            <person name="Beausoleil S.A."/>
            <person name="Villen J."/>
            <person name="Haas W."/>
            <person name="Sowa M.E."/>
            <person name="Gygi S.P."/>
        </authorList>
    </citation>
    <scope>PHOSPHORYLATION [LARGE SCALE ANALYSIS] AT SER-7</scope>
    <scope>IDENTIFICATION BY MASS SPECTROMETRY [LARGE SCALE ANALYSIS]</scope>
    <source>
        <tissue>Liver</tissue>
        <tissue>Lung</tissue>
        <tissue>Spleen</tissue>
    </source>
</reference>
<dbReference type="EMBL" id="AF350409">
    <property type="protein sequence ID" value="AAK70357.1"/>
    <property type="molecule type" value="mRNA"/>
</dbReference>
<dbReference type="EMBL" id="AF320598">
    <property type="protein sequence ID" value="AAL37198.1"/>
    <property type="molecule type" value="Genomic_DNA"/>
</dbReference>
<dbReference type="EMBL" id="AF320599">
    <property type="protein sequence ID" value="AAL37199.1"/>
    <property type="molecule type" value="Genomic_DNA"/>
</dbReference>
<dbReference type="EMBL" id="AF321553">
    <property type="protein sequence ID" value="AAK50881.1"/>
    <property type="molecule type" value="mRNA"/>
</dbReference>
<dbReference type="EMBL" id="AY137338">
    <property type="protein sequence ID" value="AAN15947.1"/>
    <property type="molecule type" value="Genomic_DNA"/>
</dbReference>
<dbReference type="EMBL" id="AY320031">
    <property type="protein sequence ID" value="AAQ16529.1"/>
    <property type="molecule type" value="mRNA"/>
</dbReference>
<dbReference type="EMBL" id="BC106776">
    <property type="protein sequence ID" value="AAI06777.1"/>
    <property type="molecule type" value="mRNA"/>
</dbReference>
<dbReference type="EMBL" id="DQ143111">
    <property type="protein sequence ID" value="ABA43361.1"/>
    <property type="molecule type" value="Genomic_DNA"/>
</dbReference>
<dbReference type="CCDS" id="CCDS20581.1"/>
<dbReference type="RefSeq" id="NP_444339.1">
    <property type="nucleotide sequence ID" value="NM_053109.3"/>
</dbReference>
<dbReference type="PDB" id="6E7D">
    <property type="method" value="X-ray"/>
    <property type="resolution" value="2.90 A"/>
    <property type="chains" value="A/B/C/D/E/F/G/H/I/J/K/L/M/N/O/P=73-194"/>
</dbReference>
<dbReference type="PDBsum" id="6E7D"/>
<dbReference type="SMR" id="Q91V08"/>
<dbReference type="FunCoup" id="Q91V08">
    <property type="interactions" value="193"/>
</dbReference>
<dbReference type="STRING" id="10090.ENSMUSP00000032260"/>
<dbReference type="GlyCosmos" id="Q91V08">
    <property type="glycosylation" value="1 site, No reported glycans"/>
</dbReference>
<dbReference type="GlyGen" id="Q91V08">
    <property type="glycosylation" value="1 site"/>
</dbReference>
<dbReference type="iPTMnet" id="Q91V08"/>
<dbReference type="PhosphoSitePlus" id="Q91V08"/>
<dbReference type="SwissPalm" id="Q91V08"/>
<dbReference type="jPOST" id="Q91V08"/>
<dbReference type="PaxDb" id="10090-ENSMUSP00000032260"/>
<dbReference type="ProteomicsDB" id="283364"/>
<dbReference type="Pumba" id="Q91V08"/>
<dbReference type="DNASU" id="93694"/>
<dbReference type="Ensembl" id="ENSMUST00000032260.6">
    <property type="protein sequence ID" value="ENSMUSP00000032260.6"/>
    <property type="gene ID" value="ENSMUSG00000030157.6"/>
</dbReference>
<dbReference type="GeneID" id="93694"/>
<dbReference type="KEGG" id="mmu:93694"/>
<dbReference type="UCSC" id="uc009efe.2">
    <property type="organism name" value="mouse"/>
</dbReference>
<dbReference type="AGR" id="MGI:2135589"/>
<dbReference type="CTD" id="29121"/>
<dbReference type="MGI" id="MGI:2135589">
    <property type="gene designation" value="Clec2d"/>
</dbReference>
<dbReference type="VEuPathDB" id="HostDB:ENSMUSG00000030157"/>
<dbReference type="eggNOG" id="KOG4297">
    <property type="taxonomic scope" value="Eukaryota"/>
</dbReference>
<dbReference type="GeneTree" id="ENSGT00940000155319"/>
<dbReference type="HOGENOM" id="CLU_049894_8_1_1"/>
<dbReference type="InParanoid" id="Q91V08"/>
<dbReference type="OMA" id="DRRWICN"/>
<dbReference type="OrthoDB" id="8935730at2759"/>
<dbReference type="PhylomeDB" id="Q91V08"/>
<dbReference type="TreeFam" id="TF351467"/>
<dbReference type="BioGRID-ORCS" id="93694">
    <property type="hits" value="0 hits in 76 CRISPR screens"/>
</dbReference>
<dbReference type="ChiTaRS" id="Clec2d">
    <property type="organism name" value="mouse"/>
</dbReference>
<dbReference type="PRO" id="PR:Q91V08"/>
<dbReference type="Proteomes" id="UP000000589">
    <property type="component" value="Chromosome 6"/>
</dbReference>
<dbReference type="RNAct" id="Q91V08">
    <property type="molecule type" value="protein"/>
</dbReference>
<dbReference type="Bgee" id="ENSMUSG00000030157">
    <property type="expression patterns" value="Expressed in peripheral lymph node and 107 other cell types or tissues"/>
</dbReference>
<dbReference type="ExpressionAtlas" id="Q91V08">
    <property type="expression patterns" value="baseline and differential"/>
</dbReference>
<dbReference type="GO" id="GO:0009897">
    <property type="term" value="C:external side of plasma membrane"/>
    <property type="evidence" value="ECO:0000314"/>
    <property type="project" value="MGI"/>
</dbReference>
<dbReference type="GO" id="GO:0005886">
    <property type="term" value="C:plasma membrane"/>
    <property type="evidence" value="ECO:0000304"/>
    <property type="project" value="MGI"/>
</dbReference>
<dbReference type="GO" id="GO:0030246">
    <property type="term" value="F:carbohydrate binding"/>
    <property type="evidence" value="ECO:0000250"/>
    <property type="project" value="MGI"/>
</dbReference>
<dbReference type="GO" id="GO:0046703">
    <property type="term" value="F:natural killer cell lectin-like receptor binding"/>
    <property type="evidence" value="ECO:0000314"/>
    <property type="project" value="MGI"/>
</dbReference>
<dbReference type="GO" id="GO:0004888">
    <property type="term" value="F:transmembrane signaling receptor activity"/>
    <property type="evidence" value="ECO:0000250"/>
    <property type="project" value="MGI"/>
</dbReference>
<dbReference type="GO" id="GO:0006968">
    <property type="term" value="P:cellular defense response"/>
    <property type="evidence" value="ECO:0000304"/>
    <property type="project" value="MGI"/>
</dbReference>
<dbReference type="GO" id="GO:0045671">
    <property type="term" value="P:negative regulation of osteoclast differentiation"/>
    <property type="evidence" value="ECO:0000314"/>
    <property type="project" value="MGI"/>
</dbReference>
<dbReference type="GO" id="GO:0042270">
    <property type="term" value="P:protection from natural killer cell mediated cytotoxicity"/>
    <property type="evidence" value="ECO:0000314"/>
    <property type="project" value="MGI"/>
</dbReference>
<dbReference type="CDD" id="cd03593">
    <property type="entry name" value="CLECT_NK_receptors_like"/>
    <property type="match status" value="1"/>
</dbReference>
<dbReference type="FunFam" id="3.10.100.10:FF:000062">
    <property type="entry name" value="C-type lectin domain family 2 member D"/>
    <property type="match status" value="1"/>
</dbReference>
<dbReference type="Gene3D" id="3.10.100.10">
    <property type="entry name" value="Mannose-Binding Protein A, subunit A"/>
    <property type="match status" value="1"/>
</dbReference>
<dbReference type="InterPro" id="IPR001304">
    <property type="entry name" value="C-type_lectin-like"/>
</dbReference>
<dbReference type="InterPro" id="IPR016186">
    <property type="entry name" value="C-type_lectin-like/link_sf"/>
</dbReference>
<dbReference type="InterPro" id="IPR050828">
    <property type="entry name" value="C-type_lectin/matrix_domain"/>
</dbReference>
<dbReference type="InterPro" id="IPR016187">
    <property type="entry name" value="CTDL_fold"/>
</dbReference>
<dbReference type="InterPro" id="IPR033992">
    <property type="entry name" value="NKR-like_CTLD"/>
</dbReference>
<dbReference type="PANTHER" id="PTHR45710:SF19">
    <property type="entry name" value="C-TYPE LECTIN DOMAIN FAMILY 2 MEMBER D-RELATED"/>
    <property type="match status" value="1"/>
</dbReference>
<dbReference type="PANTHER" id="PTHR45710">
    <property type="entry name" value="C-TYPE LECTIN DOMAIN-CONTAINING PROTEIN 180"/>
    <property type="match status" value="1"/>
</dbReference>
<dbReference type="Pfam" id="PF00059">
    <property type="entry name" value="Lectin_C"/>
    <property type="match status" value="1"/>
</dbReference>
<dbReference type="SMART" id="SM00034">
    <property type="entry name" value="CLECT"/>
    <property type="match status" value="1"/>
</dbReference>
<dbReference type="SUPFAM" id="SSF56436">
    <property type="entry name" value="C-type lectin-like"/>
    <property type="match status" value="1"/>
</dbReference>
<dbReference type="PROSITE" id="PS50041">
    <property type="entry name" value="C_TYPE_LECTIN_2"/>
    <property type="match status" value="1"/>
</dbReference>
<sequence>MCVTKASLPMLSPTGSPQEVEVGKILQGKRHGTISPESCAKLYCYYGVIMVLTVAVIALSVALSATKTEQIPVNKTYAACPQNWIGVENKCFYFSEYPSNWTFAQAFCMAQEAQLARFDNQDELNFLMRYKANFDSWIGLHRESSEHPWKWTDNTEYNNTIPIRGEERFAYLNNNGISSTRIYSLRMWICSKLNSYSLHCQTPFFPS</sequence>
<feature type="chain" id="PRO_0000315286" description="C-type lectin domain family 2 member D">
    <location>
        <begin position="1"/>
        <end position="207"/>
    </location>
</feature>
<feature type="topological domain" description="Cytoplasmic" evidence="2">
    <location>
        <begin position="1"/>
        <end position="41"/>
    </location>
</feature>
<feature type="transmembrane region" description="Helical; Signal-anchor for type II membrane protein" evidence="2">
    <location>
        <begin position="42"/>
        <end position="62"/>
    </location>
</feature>
<feature type="topological domain" description="Extracellular" evidence="2">
    <location>
        <begin position="63"/>
        <end position="207"/>
    </location>
</feature>
<feature type="domain" description="C-type lectin" evidence="3">
    <location>
        <begin position="87"/>
        <end position="202"/>
    </location>
</feature>
<feature type="modified residue" description="Phosphoserine" evidence="11">
    <location>
        <position position="7"/>
    </location>
</feature>
<feature type="modified residue" description="Phosphoserine" evidence="10">
    <location>
        <position position="12"/>
    </location>
</feature>
<feature type="glycosylation site" description="N-linked (GlcNAc...) asparagine" evidence="2">
    <location>
        <position position="100"/>
    </location>
</feature>
<feature type="disulfide bond" evidence="3">
    <location>
        <begin position="80"/>
        <end position="91"/>
    </location>
</feature>
<feature type="strand" evidence="12">
    <location>
        <begin position="85"/>
        <end position="87"/>
    </location>
</feature>
<feature type="strand" evidence="12">
    <location>
        <begin position="90"/>
        <end position="94"/>
    </location>
</feature>
<feature type="helix" evidence="12">
    <location>
        <begin position="101"/>
        <end position="110"/>
    </location>
</feature>
<feature type="helix" evidence="12">
    <location>
        <begin position="121"/>
        <end position="130"/>
    </location>
</feature>
<feature type="turn" evidence="12">
    <location>
        <begin position="131"/>
        <end position="133"/>
    </location>
</feature>
<feature type="strand" evidence="12">
    <location>
        <begin position="136"/>
        <end position="141"/>
    </location>
</feature>
<feature type="strand" evidence="12">
    <location>
        <begin position="168"/>
        <end position="173"/>
    </location>
</feature>
<feature type="strand" evidence="12">
    <location>
        <begin position="176"/>
        <end position="180"/>
    </location>
</feature>
<feature type="strand" evidence="12">
    <location>
        <begin position="186"/>
        <end position="193"/>
    </location>
</feature>
<protein>
    <recommendedName>
        <fullName>C-type lectin domain family 2 member D</fullName>
    </recommendedName>
    <alternativeName>
        <fullName>C-type lectin-related protein B</fullName>
        <shortName>Clr-b</shortName>
    </alternativeName>
    <alternativeName>
        <fullName>Lectin-like transmembrane protein</fullName>
    </alternativeName>
    <alternativeName>
        <fullName>Osteoclast inhibitory lectin</fullName>
    </alternativeName>
</protein>
<name>CLC2D_MOUSE</name>
<proteinExistence type="evidence at protein level"/>
<keyword id="KW-0002">3D-structure</keyword>
<keyword id="KW-1003">Cell membrane</keyword>
<keyword id="KW-1015">Disulfide bond</keyword>
<keyword id="KW-0325">Glycoprotein</keyword>
<keyword id="KW-0430">Lectin</keyword>
<keyword id="KW-0472">Membrane</keyword>
<keyword id="KW-0597">Phosphoprotein</keyword>
<keyword id="KW-0675">Receptor</keyword>
<keyword id="KW-1185">Reference proteome</keyword>
<keyword id="KW-0735">Signal-anchor</keyword>
<keyword id="KW-0812">Transmembrane</keyword>
<keyword id="KW-1133">Transmembrane helix</keyword>